<accession>Q58G35</accession>
<accession>F4HTT2</accession>
<evidence type="ECO:0000250" key="1"/>
<evidence type="ECO:0000255" key="2"/>
<evidence type="ECO:0000305" key="3"/>
<reference key="1">
    <citation type="journal article" date="2000" name="Nature">
        <title>Sequence and analysis of chromosome 1 of the plant Arabidopsis thaliana.</title>
        <authorList>
            <person name="Theologis A."/>
            <person name="Ecker J.R."/>
            <person name="Palm C.J."/>
            <person name="Federspiel N.A."/>
            <person name="Kaul S."/>
            <person name="White O."/>
            <person name="Alonso J."/>
            <person name="Altafi H."/>
            <person name="Araujo R."/>
            <person name="Bowman C.L."/>
            <person name="Brooks S.Y."/>
            <person name="Buehler E."/>
            <person name="Chan A."/>
            <person name="Chao Q."/>
            <person name="Chen H."/>
            <person name="Cheuk R.F."/>
            <person name="Chin C.W."/>
            <person name="Chung M.K."/>
            <person name="Conn L."/>
            <person name="Conway A.B."/>
            <person name="Conway A.R."/>
            <person name="Creasy T.H."/>
            <person name="Dewar K."/>
            <person name="Dunn P."/>
            <person name="Etgu P."/>
            <person name="Feldblyum T.V."/>
            <person name="Feng J.-D."/>
            <person name="Fong B."/>
            <person name="Fujii C.Y."/>
            <person name="Gill J.E."/>
            <person name="Goldsmith A.D."/>
            <person name="Haas B."/>
            <person name="Hansen N.F."/>
            <person name="Hughes B."/>
            <person name="Huizar L."/>
            <person name="Hunter J.L."/>
            <person name="Jenkins J."/>
            <person name="Johnson-Hopson C."/>
            <person name="Khan S."/>
            <person name="Khaykin E."/>
            <person name="Kim C.J."/>
            <person name="Koo H.L."/>
            <person name="Kremenetskaia I."/>
            <person name="Kurtz D.B."/>
            <person name="Kwan A."/>
            <person name="Lam B."/>
            <person name="Langin-Hooper S."/>
            <person name="Lee A."/>
            <person name="Lee J.M."/>
            <person name="Lenz C.A."/>
            <person name="Li J.H."/>
            <person name="Li Y.-P."/>
            <person name="Lin X."/>
            <person name="Liu S.X."/>
            <person name="Liu Z.A."/>
            <person name="Luros J.S."/>
            <person name="Maiti R."/>
            <person name="Marziali A."/>
            <person name="Militscher J."/>
            <person name="Miranda M."/>
            <person name="Nguyen M."/>
            <person name="Nierman W.C."/>
            <person name="Osborne B.I."/>
            <person name="Pai G."/>
            <person name="Peterson J."/>
            <person name="Pham P.K."/>
            <person name="Rizzo M."/>
            <person name="Rooney T."/>
            <person name="Rowley D."/>
            <person name="Sakano H."/>
            <person name="Salzberg S.L."/>
            <person name="Schwartz J.R."/>
            <person name="Shinn P."/>
            <person name="Southwick A.M."/>
            <person name="Sun H."/>
            <person name="Tallon L.J."/>
            <person name="Tambunga G."/>
            <person name="Toriumi M.J."/>
            <person name="Town C.D."/>
            <person name="Utterback T."/>
            <person name="Van Aken S."/>
            <person name="Vaysberg M."/>
            <person name="Vysotskaia V.S."/>
            <person name="Walker M."/>
            <person name="Wu D."/>
            <person name="Yu G."/>
            <person name="Fraser C.M."/>
            <person name="Venter J.C."/>
            <person name="Davis R.W."/>
        </authorList>
    </citation>
    <scope>NUCLEOTIDE SEQUENCE [LARGE SCALE GENOMIC DNA]</scope>
    <source>
        <strain>cv. Columbia</strain>
    </source>
</reference>
<reference key="2">
    <citation type="journal article" date="2017" name="Plant J.">
        <title>Araport11: a complete reannotation of the Arabidopsis thaliana reference genome.</title>
        <authorList>
            <person name="Cheng C.Y."/>
            <person name="Krishnakumar V."/>
            <person name="Chan A.P."/>
            <person name="Thibaud-Nissen F."/>
            <person name="Schobel S."/>
            <person name="Town C.D."/>
        </authorList>
    </citation>
    <scope>GENOME REANNOTATION</scope>
    <source>
        <strain>cv. Columbia</strain>
    </source>
</reference>
<reference key="3">
    <citation type="submission" date="2005-03" db="EMBL/GenBank/DDBJ databases">
        <authorList>
            <person name="Underwood B.A."/>
            <person name="Xiao Y.-L."/>
            <person name="Moskal W.A. Jr."/>
            <person name="Monaghan E.L."/>
            <person name="Wang W."/>
            <person name="Redman J.C."/>
            <person name="Wu H.C."/>
            <person name="Utterback T."/>
            <person name="Town C.D."/>
        </authorList>
    </citation>
    <scope>NUCLEOTIDE SEQUENCE [LARGE SCALE MRNA]</scope>
    <source>
        <strain>cv. Columbia</strain>
    </source>
</reference>
<reference key="4">
    <citation type="submission" date="2005-07" db="EMBL/GenBank/DDBJ databases">
        <title>Reconstruction of cDNA sequences for hypothetical genes in Arabidopsis thaliana from 5' and 3' RACE products.</title>
        <authorList>
            <person name="Xiao Y.-L."/>
            <person name="Underwood B.A."/>
            <person name="Moskal W.A. Jr."/>
            <person name="Torian U."/>
            <person name="Redman J.C."/>
            <person name="Wu H.C."/>
            <person name="Utterback T."/>
            <person name="Town C.D."/>
        </authorList>
    </citation>
    <scope>NUCLEOTIDE SEQUENCE [LARGE SCALE MRNA]</scope>
    <source>
        <strain>cv. Columbia</strain>
    </source>
</reference>
<gene>
    <name type="primary">TET17</name>
    <name type="ordered locus">At1g74045</name>
    <name type="ORF">F2P9</name>
</gene>
<protein>
    <recommendedName>
        <fullName>Tetraspanin-17</fullName>
    </recommendedName>
</protein>
<feature type="chain" id="PRO_0000421057" description="Tetraspanin-17">
    <location>
        <begin position="1"/>
        <end position="248"/>
    </location>
</feature>
<feature type="topological domain" description="Cytoplasmic" evidence="2">
    <location>
        <begin position="1"/>
        <end position="7"/>
    </location>
</feature>
<feature type="transmembrane region" description="Helical" evidence="2">
    <location>
        <begin position="8"/>
        <end position="28"/>
    </location>
</feature>
<feature type="topological domain" description="Extracellular" evidence="2">
    <location>
        <begin position="29"/>
        <end position="44"/>
    </location>
</feature>
<feature type="transmembrane region" description="Helical" evidence="2">
    <location>
        <begin position="45"/>
        <end position="65"/>
    </location>
</feature>
<feature type="topological domain" description="Cytoplasmic" evidence="2">
    <location>
        <begin position="66"/>
        <end position="69"/>
    </location>
</feature>
<feature type="transmembrane region" description="Helical" evidence="2">
    <location>
        <begin position="70"/>
        <end position="90"/>
    </location>
</feature>
<feature type="topological domain" description="Extracellular" evidence="2">
    <location>
        <begin position="91"/>
        <end position="210"/>
    </location>
</feature>
<feature type="transmembrane region" description="Helical" evidence="2">
    <location>
        <begin position="211"/>
        <end position="231"/>
    </location>
</feature>
<feature type="topological domain" description="Cytoplasmic" evidence="2">
    <location>
        <begin position="232"/>
        <end position="248"/>
    </location>
</feature>
<feature type="glycosylation site" description="N-linked (GlcNAc...) asparagine" evidence="2">
    <location>
        <position position="96"/>
    </location>
</feature>
<feature type="glycosylation site" description="N-linked (GlcNAc...) asparagine" evidence="2">
    <location>
        <position position="109"/>
    </location>
</feature>
<feature type="glycosylation site" description="N-linked (GlcNAc...) asparagine" evidence="2">
    <location>
        <position position="141"/>
    </location>
</feature>
<keyword id="KW-0325">Glycoprotein</keyword>
<keyword id="KW-0472">Membrane</keyword>
<keyword id="KW-1185">Reference proteome</keyword>
<keyword id="KW-0812">Transmembrane</keyword>
<keyword id="KW-1133">Transmembrane helix</keyword>
<organism>
    <name type="scientific">Arabidopsis thaliana</name>
    <name type="common">Mouse-ear cress</name>
    <dbReference type="NCBI Taxonomy" id="3702"/>
    <lineage>
        <taxon>Eukaryota</taxon>
        <taxon>Viridiplantae</taxon>
        <taxon>Streptophyta</taxon>
        <taxon>Embryophyta</taxon>
        <taxon>Tracheophyta</taxon>
        <taxon>Spermatophyta</taxon>
        <taxon>Magnoliopsida</taxon>
        <taxon>eudicotyledons</taxon>
        <taxon>Gunneridae</taxon>
        <taxon>Pentapetalae</taxon>
        <taxon>rosids</taxon>
        <taxon>malvids</taxon>
        <taxon>Brassicales</taxon>
        <taxon>Brassicaceae</taxon>
        <taxon>Camelineae</taxon>
        <taxon>Arabidopsis</taxon>
    </lineage>
</organism>
<comment type="function">
    <text evidence="1">May be involved in the regulation of cell differentiation.</text>
</comment>
<comment type="subcellular location">
    <subcellularLocation>
        <location evidence="1">Membrane</location>
        <topology evidence="3">Multi-pass membrane protein</topology>
    </subcellularLocation>
</comment>
<comment type="similarity">
    <text evidence="3">Belongs to the tetraspanin (TM4SF) family.</text>
</comment>
<name>TET17_ARATH</name>
<sequence length="248" mass="28404">MSEVRTGFLTMTTIILISIGLTMMGTGLYQKTTMSSCIRETSSQFTLLGLLLLLIPQIGLYGICCRSKRLFNFFFYGMVVLIIIVSYYSIKCSIYNTTFGIAKNPAKDNRTVPQLLGRLVSKEKFEKVTYCIIHKHDCNYNASKNSNVWKYCCAQPVGCGTITMFDKPGEWSWKHQYERNQVPEECSYEYCLDCRGCQLSILKAIVHQWKYLSMFAYPALVLSCISLAIAWSLKETIHENEDYRGSYS</sequence>
<proteinExistence type="evidence at transcript level"/>
<dbReference type="EMBL" id="AC016662">
    <property type="status" value="NOT_ANNOTATED_CDS"/>
    <property type="molecule type" value="Genomic_DNA"/>
</dbReference>
<dbReference type="EMBL" id="CP002684">
    <property type="protein sequence ID" value="AEE35541.2"/>
    <property type="molecule type" value="Genomic_DNA"/>
</dbReference>
<dbReference type="EMBL" id="AY954774">
    <property type="protein sequence ID" value="AAX55100.1"/>
    <property type="molecule type" value="mRNA"/>
</dbReference>
<dbReference type="EMBL" id="DQ132682">
    <property type="protein sequence ID" value="AAZ52712.1"/>
    <property type="molecule type" value="mRNA"/>
</dbReference>
<dbReference type="RefSeq" id="NP_683494.2">
    <property type="nucleotide sequence ID" value="NM_148653.2"/>
</dbReference>
<dbReference type="STRING" id="3702.Q58G35"/>
<dbReference type="GlyCosmos" id="Q58G35">
    <property type="glycosylation" value="3 sites, No reported glycans"/>
</dbReference>
<dbReference type="GlyGen" id="Q58G35">
    <property type="glycosylation" value="3 sites"/>
</dbReference>
<dbReference type="PaxDb" id="3702-AT1G74045.1"/>
<dbReference type="EnsemblPlants" id="AT1G74045.1">
    <property type="protein sequence ID" value="AT1G74045.1"/>
    <property type="gene ID" value="AT1G74045"/>
</dbReference>
<dbReference type="GeneID" id="843743"/>
<dbReference type="Gramene" id="AT1G74045.1">
    <property type="protein sequence ID" value="AT1G74045.1"/>
    <property type="gene ID" value="AT1G74045"/>
</dbReference>
<dbReference type="KEGG" id="ath:AT1G74045"/>
<dbReference type="Araport" id="AT1G74045"/>
<dbReference type="TAIR" id="AT1G74045">
    <property type="gene designation" value="TET17"/>
</dbReference>
<dbReference type="eggNOG" id="ENOG502R826">
    <property type="taxonomic scope" value="Eukaryota"/>
</dbReference>
<dbReference type="HOGENOM" id="CLU_1121427_0_0_1"/>
<dbReference type="InParanoid" id="Q58G35"/>
<dbReference type="OMA" id="GICCRSK"/>
<dbReference type="OrthoDB" id="1079073at2759"/>
<dbReference type="PhylomeDB" id="Q58G35"/>
<dbReference type="PRO" id="PR:Q58G35"/>
<dbReference type="Proteomes" id="UP000006548">
    <property type="component" value="Chromosome 1"/>
</dbReference>
<dbReference type="ExpressionAtlas" id="Q58G35">
    <property type="expression patterns" value="baseline"/>
</dbReference>
<dbReference type="GO" id="GO:0016020">
    <property type="term" value="C:membrane"/>
    <property type="evidence" value="ECO:0007669"/>
    <property type="project" value="UniProtKB-SubCell"/>
</dbReference>
<dbReference type="GO" id="GO:0009734">
    <property type="term" value="P:auxin-activated signaling pathway"/>
    <property type="evidence" value="ECO:0007669"/>
    <property type="project" value="InterPro"/>
</dbReference>
<dbReference type="InterPro" id="IPR044991">
    <property type="entry name" value="TET_plant"/>
</dbReference>
<dbReference type="InterPro" id="IPR018499">
    <property type="entry name" value="Tetraspanin/Peripherin"/>
</dbReference>
<dbReference type="PANTHER" id="PTHR32191">
    <property type="entry name" value="TETRASPANIN-8-RELATED"/>
    <property type="match status" value="1"/>
</dbReference>
<dbReference type="Pfam" id="PF00335">
    <property type="entry name" value="Tetraspanin"/>
    <property type="match status" value="1"/>
</dbReference>